<organism>
    <name type="scientific">Arabidopsis thaliana</name>
    <name type="common">Mouse-ear cress</name>
    <dbReference type="NCBI Taxonomy" id="3702"/>
    <lineage>
        <taxon>Eukaryota</taxon>
        <taxon>Viridiplantae</taxon>
        <taxon>Streptophyta</taxon>
        <taxon>Embryophyta</taxon>
        <taxon>Tracheophyta</taxon>
        <taxon>Spermatophyta</taxon>
        <taxon>Magnoliopsida</taxon>
        <taxon>eudicotyledons</taxon>
        <taxon>Gunneridae</taxon>
        <taxon>Pentapetalae</taxon>
        <taxon>rosids</taxon>
        <taxon>malvids</taxon>
        <taxon>Brassicales</taxon>
        <taxon>Brassicaceae</taxon>
        <taxon>Camelineae</taxon>
        <taxon>Arabidopsis</taxon>
    </lineage>
</organism>
<accession>Q8L7S6</accession>
<accession>O04477</accession>
<evidence type="ECO:0000250" key="1"/>
<evidence type="ECO:0000255" key="2"/>
<evidence type="ECO:0000269" key="3">
    <source>
    </source>
</evidence>
<evidence type="ECO:0000269" key="4">
    <source>
    </source>
</evidence>
<evidence type="ECO:0000269" key="5">
    <source>
    </source>
</evidence>
<evidence type="ECO:0000305" key="6"/>
<comment type="function">
    <text evidence="3 4 5">Has a broad substrate specificity. Can use synthetic substrates such as pyridylaminated chitotriose, p-nitrophenyl-beta-N-acetylglucosaminide, p-nitrophenyl-2-acetamido-2-deoxy-beta-D-glucopyranoside (pNP-GlcNAc), p-nitrophenyl-2-acetamido-2-deoxy-beta-D-galactopyranoside (pNP-GalNAc), 4-methylumbelliferyl-2-acetamido-2-deoxy-beta-D-glucopyranoside (MU-GlcNAc), and 4-methylumbelliferyl-6-sulfo-2-acetamido-2-deoxy-beta-D-glucopyranoside (MU-GlcNAc-6SO(4)) as substrates. Removes terminal GlcNAc residues from alpha1,3- and alpha1,6-mannosyl branches of biantennary N-glycans without any strict branch preference. Required for the presence of paucimannosidic N-glycans in glycoproteins of roots and leaves.</text>
</comment>
<comment type="catalytic activity">
    <reaction evidence="4">
        <text>Hydrolysis of terminal non-reducing N-acetyl-D-hexosamine residues in N-acetyl-beta-D-hexosaminides.</text>
        <dbReference type="EC" id="3.2.1.52"/>
    </reaction>
</comment>
<comment type="activity regulation">
    <text evidence="3">Slightly inhibited by N-acetylcastanospermine.</text>
</comment>
<comment type="biophysicochemical properties">
    <kinetics>
        <KM evidence="3 4">2.2 mM for pNP-GlcNAc (at pH 4.6 and 37 degrees Celsius)</KM>
        <Vmax evidence="3 4">50.3 umol/min/mg enzyme with pNP-GlcNAc as substrate (at pH 4.6 and 37 degrees Celsius)</Vmax>
    </kinetics>
    <phDependence>
        <text evidence="3 4">Optimum pH is 4-5.</text>
    </phDependence>
</comment>
<comment type="subcellular location">
    <subcellularLocation>
        <location evidence="4 5">Cell membrane</location>
    </subcellularLocation>
</comment>
<comment type="tissue specificity">
    <text evidence="4">Expressed in roots, leaves, stems, flowers and siliques.</text>
</comment>
<comment type="PTM">
    <text evidence="4">N-glycosylated.</text>
</comment>
<comment type="disruption phenotype">
    <text evidence="5">Reduced amounts of paucimannosidic N-glycans-containing glycoproteins in roots and leaves.</text>
</comment>
<comment type="similarity">
    <text evidence="6">Belongs to the glycosyl hydrolase 20 family.</text>
</comment>
<comment type="sequence caution" evidence="6">
    <conflict type="erroneous gene model prediction">
        <sequence resource="EMBL-CDS" id="AAB60911"/>
    </conflict>
</comment>
<dbReference type="EC" id="3.2.1.52"/>
<dbReference type="EMBL" id="AC001229">
    <property type="protein sequence ID" value="AAB60911.1"/>
    <property type="status" value="ALT_SEQ"/>
    <property type="molecule type" value="Genomic_DNA"/>
</dbReference>
<dbReference type="EMBL" id="CP002684">
    <property type="protein sequence ID" value="AEE34399.1"/>
    <property type="molecule type" value="Genomic_DNA"/>
</dbReference>
<dbReference type="EMBL" id="AY128283">
    <property type="protein sequence ID" value="AAM91092.1"/>
    <property type="molecule type" value="mRNA"/>
</dbReference>
<dbReference type="EMBL" id="BT000831">
    <property type="protein sequence ID" value="AAN33206.1"/>
    <property type="molecule type" value="mRNA"/>
</dbReference>
<dbReference type="PIR" id="A96681">
    <property type="entry name" value="A96681"/>
</dbReference>
<dbReference type="RefSeq" id="NP_176737.2">
    <property type="nucleotide sequence ID" value="NM_105233.5"/>
</dbReference>
<dbReference type="SMR" id="Q8L7S6"/>
<dbReference type="FunCoup" id="Q8L7S6">
    <property type="interactions" value="1506"/>
</dbReference>
<dbReference type="STRING" id="3702.Q8L7S6"/>
<dbReference type="CAZy" id="GH20">
    <property type="family name" value="Glycoside Hydrolase Family 20"/>
</dbReference>
<dbReference type="GlyCosmos" id="Q8L7S6">
    <property type="glycosylation" value="5 sites, No reported glycans"/>
</dbReference>
<dbReference type="GlyGen" id="Q8L7S6">
    <property type="glycosylation" value="5 sites"/>
</dbReference>
<dbReference type="iPTMnet" id="Q8L7S6"/>
<dbReference type="PaxDb" id="3702-AT1G65590.1"/>
<dbReference type="ProteomicsDB" id="230361"/>
<dbReference type="EnsemblPlants" id="AT1G65590.1">
    <property type="protein sequence ID" value="AT1G65590.1"/>
    <property type="gene ID" value="AT1G65590"/>
</dbReference>
<dbReference type="GeneID" id="842871"/>
<dbReference type="Gramene" id="AT1G65590.1">
    <property type="protein sequence ID" value="AT1G65590.1"/>
    <property type="gene ID" value="AT1G65590"/>
</dbReference>
<dbReference type="KEGG" id="ath:AT1G65590"/>
<dbReference type="Araport" id="AT1G65590"/>
<dbReference type="TAIR" id="AT1G65590">
    <property type="gene designation" value="HEXO3"/>
</dbReference>
<dbReference type="eggNOG" id="KOG2499">
    <property type="taxonomic scope" value="Eukaryota"/>
</dbReference>
<dbReference type="HOGENOM" id="CLU_007082_0_4_1"/>
<dbReference type="InParanoid" id="Q8L7S6"/>
<dbReference type="OMA" id="HATDTQS"/>
<dbReference type="PhylomeDB" id="Q8L7S6"/>
<dbReference type="BioCyc" id="ARA:AT1G65590-MONOMER"/>
<dbReference type="BRENDA" id="3.2.1.52">
    <property type="organism ID" value="399"/>
</dbReference>
<dbReference type="PRO" id="PR:Q8L7S6"/>
<dbReference type="Proteomes" id="UP000006548">
    <property type="component" value="Chromosome 1"/>
</dbReference>
<dbReference type="ExpressionAtlas" id="Q8L7S6">
    <property type="expression patterns" value="baseline and differential"/>
</dbReference>
<dbReference type="GO" id="GO:0005634">
    <property type="term" value="C:nucleus"/>
    <property type="evidence" value="ECO:0007005"/>
    <property type="project" value="TAIR"/>
</dbReference>
<dbReference type="GO" id="GO:0005886">
    <property type="term" value="C:plasma membrane"/>
    <property type="evidence" value="ECO:0000314"/>
    <property type="project" value="TAIR"/>
</dbReference>
<dbReference type="GO" id="GO:0004563">
    <property type="term" value="F:beta-N-acetylhexosaminidase activity"/>
    <property type="evidence" value="ECO:0000314"/>
    <property type="project" value="TAIR"/>
</dbReference>
<dbReference type="GO" id="GO:0015929">
    <property type="term" value="F:hexosaminidase activity"/>
    <property type="evidence" value="ECO:0000314"/>
    <property type="project" value="TAIR"/>
</dbReference>
<dbReference type="GO" id="GO:0005975">
    <property type="term" value="P:carbohydrate metabolic process"/>
    <property type="evidence" value="ECO:0007669"/>
    <property type="project" value="InterPro"/>
</dbReference>
<dbReference type="CDD" id="cd06562">
    <property type="entry name" value="GH20_HexA_HexB-like"/>
    <property type="match status" value="1"/>
</dbReference>
<dbReference type="FunFam" id="3.20.20.80:FF:000063">
    <property type="entry name" value="Beta-hexosaminidase"/>
    <property type="match status" value="1"/>
</dbReference>
<dbReference type="Gene3D" id="3.30.379.10">
    <property type="entry name" value="Chitobiase/beta-hexosaminidase domain 2-like"/>
    <property type="match status" value="1"/>
</dbReference>
<dbReference type="Gene3D" id="3.20.20.80">
    <property type="entry name" value="Glycosidases"/>
    <property type="match status" value="1"/>
</dbReference>
<dbReference type="InterPro" id="IPR025705">
    <property type="entry name" value="Beta_hexosaminidase_sua/sub"/>
</dbReference>
<dbReference type="InterPro" id="IPR015883">
    <property type="entry name" value="Glyco_hydro_20_cat"/>
</dbReference>
<dbReference type="InterPro" id="IPR017853">
    <property type="entry name" value="Glycoside_hydrolase_SF"/>
</dbReference>
<dbReference type="InterPro" id="IPR029018">
    <property type="entry name" value="Hex-like_dom2"/>
</dbReference>
<dbReference type="InterPro" id="IPR029019">
    <property type="entry name" value="HEX_eukaryotic_N"/>
</dbReference>
<dbReference type="PANTHER" id="PTHR22600">
    <property type="entry name" value="BETA-HEXOSAMINIDASE"/>
    <property type="match status" value="1"/>
</dbReference>
<dbReference type="PANTHER" id="PTHR22600:SF21">
    <property type="entry name" value="BETA-HEXOSAMINIDASE A"/>
    <property type="match status" value="1"/>
</dbReference>
<dbReference type="Pfam" id="PF00728">
    <property type="entry name" value="Glyco_hydro_20"/>
    <property type="match status" value="1"/>
</dbReference>
<dbReference type="Pfam" id="PF14845">
    <property type="entry name" value="Glycohydro_20b2"/>
    <property type="match status" value="1"/>
</dbReference>
<dbReference type="PIRSF" id="PIRSF001093">
    <property type="entry name" value="B-hxosamndse_ab_euk"/>
    <property type="match status" value="1"/>
</dbReference>
<dbReference type="PRINTS" id="PR00738">
    <property type="entry name" value="GLHYDRLASE20"/>
</dbReference>
<dbReference type="SUPFAM" id="SSF51445">
    <property type="entry name" value="(Trans)glycosidases"/>
    <property type="match status" value="1"/>
</dbReference>
<dbReference type="SUPFAM" id="SSF55545">
    <property type="entry name" value="beta-N-acetylhexosaminidase-like domain"/>
    <property type="match status" value="1"/>
</dbReference>
<proteinExistence type="evidence at protein level"/>
<keyword id="KW-1003">Cell membrane</keyword>
<keyword id="KW-1015">Disulfide bond</keyword>
<keyword id="KW-0325">Glycoprotein</keyword>
<keyword id="KW-0326">Glycosidase</keyword>
<keyword id="KW-0378">Hydrolase</keyword>
<keyword id="KW-0472">Membrane</keyword>
<keyword id="KW-1185">Reference proteome</keyword>
<keyword id="KW-0732">Signal</keyword>
<gene>
    <name type="primary">HEXO3</name>
    <name type="synonym">HEX1</name>
    <name type="ordered locus">At1g65590</name>
    <name type="ORF">F5I14.13</name>
</gene>
<sequence length="535" mass="60014">MRGSGAKIAGVLPLFMLFIAGTISAFEDIERLRIWPLPAQVSHGGRRMYLSGDFKLVTEGSKYGDASGILKEGFDRMLGVVRLSHVISGDRNSSGTGGSALLQGLHVIISSSTDELEYGADESYKLVVPSPEKPSYAQLEAKSVYGALHGLQTFSQLCHFNLKKKVIEILMTPWNIIDQPRFSYRGLLIDTSRHYLPLPVIKNVIDSMTYAKLNVLHWHIVDTQSFPLEIPSYPKLWNGAYSSSQRYTFEDAAEIVNYARRRGIHVLAEIDVPGHALSWGKGYPALWPSKNCQEPLDVSSDFTFKVIDGILSDFSKIFKFKFVHLGGDEVNTTCWSATPRIAQWLKKHRMSEKEAYQYFVLRAQKIALSHGYEIINWEETFINFGSKLNRKTVVHNWLNTGLVENVTASGLRCIVSNQEFWYLDHIDAPWQGFYANEPFQNITDKKQQSLVLGGEVCMWGEHIDASDIEQTIWPRAAAAAERLWTPYAKLAKNPNNVTTRLAHFRCLLNQRGVAAAPLVGGGRVVPFEPGSCLAQ</sequence>
<name>HEXO3_ARATH</name>
<protein>
    <recommendedName>
        <fullName>Beta-hexosaminidase 3</fullName>
        <ecNumber>3.2.1.52</ecNumber>
    </recommendedName>
    <alternativeName>
        <fullName>Beta-GlcNAcase 3</fullName>
    </alternativeName>
    <alternativeName>
        <fullName>Beta-N-acetylhexosaminidase 3</fullName>
    </alternativeName>
    <alternativeName>
        <fullName>Beta-hexosaminidase 1</fullName>
        <shortName>AtHEX1</shortName>
    </alternativeName>
    <alternativeName>
        <fullName>N-acetyl-beta-glucosaminidase 3</fullName>
    </alternativeName>
</protein>
<feature type="signal peptide" evidence="2">
    <location>
        <begin position="1"/>
        <end position="24"/>
    </location>
</feature>
<feature type="chain" id="PRO_0000420288" description="Beta-hexosaminidase 3">
    <location>
        <begin position="25"/>
        <end position="535"/>
    </location>
</feature>
<feature type="active site" description="Proton donor" evidence="1">
    <location>
        <position position="329"/>
    </location>
</feature>
<feature type="glycosylation site" description="N-linked (GlcNAc...) asparagine" evidence="2">
    <location>
        <position position="92"/>
    </location>
</feature>
<feature type="glycosylation site" description="N-linked (GlcNAc...) asparagine" evidence="2">
    <location>
        <position position="331"/>
    </location>
</feature>
<feature type="glycosylation site" description="N-linked (GlcNAc...) asparagine" evidence="2">
    <location>
        <position position="405"/>
    </location>
</feature>
<feature type="glycosylation site" description="N-linked (GlcNAc...) asparagine" evidence="2">
    <location>
        <position position="441"/>
    </location>
</feature>
<feature type="glycosylation site" description="N-linked (GlcNAc...) asparagine" evidence="2">
    <location>
        <position position="496"/>
    </location>
</feature>
<feature type="disulfide bond" evidence="1">
    <location>
        <begin position="292"/>
        <end position="334"/>
    </location>
</feature>
<feature type="disulfide bond" evidence="1">
    <location>
        <begin position="506"/>
        <end position="532"/>
    </location>
</feature>
<reference key="1">
    <citation type="journal article" date="2000" name="Nature">
        <title>Sequence and analysis of chromosome 1 of the plant Arabidopsis thaliana.</title>
        <authorList>
            <person name="Theologis A."/>
            <person name="Ecker J.R."/>
            <person name="Palm C.J."/>
            <person name="Federspiel N.A."/>
            <person name="Kaul S."/>
            <person name="White O."/>
            <person name="Alonso J."/>
            <person name="Altafi H."/>
            <person name="Araujo R."/>
            <person name="Bowman C.L."/>
            <person name="Brooks S.Y."/>
            <person name="Buehler E."/>
            <person name="Chan A."/>
            <person name="Chao Q."/>
            <person name="Chen H."/>
            <person name="Cheuk R.F."/>
            <person name="Chin C.W."/>
            <person name="Chung M.K."/>
            <person name="Conn L."/>
            <person name="Conway A.B."/>
            <person name="Conway A.R."/>
            <person name="Creasy T.H."/>
            <person name="Dewar K."/>
            <person name="Dunn P."/>
            <person name="Etgu P."/>
            <person name="Feldblyum T.V."/>
            <person name="Feng J.-D."/>
            <person name="Fong B."/>
            <person name="Fujii C.Y."/>
            <person name="Gill J.E."/>
            <person name="Goldsmith A.D."/>
            <person name="Haas B."/>
            <person name="Hansen N.F."/>
            <person name="Hughes B."/>
            <person name="Huizar L."/>
            <person name="Hunter J.L."/>
            <person name="Jenkins J."/>
            <person name="Johnson-Hopson C."/>
            <person name="Khan S."/>
            <person name="Khaykin E."/>
            <person name="Kim C.J."/>
            <person name="Koo H.L."/>
            <person name="Kremenetskaia I."/>
            <person name="Kurtz D.B."/>
            <person name="Kwan A."/>
            <person name="Lam B."/>
            <person name="Langin-Hooper S."/>
            <person name="Lee A."/>
            <person name="Lee J.M."/>
            <person name="Lenz C.A."/>
            <person name="Li J.H."/>
            <person name="Li Y.-P."/>
            <person name="Lin X."/>
            <person name="Liu S.X."/>
            <person name="Liu Z.A."/>
            <person name="Luros J.S."/>
            <person name="Maiti R."/>
            <person name="Marziali A."/>
            <person name="Militscher J."/>
            <person name="Miranda M."/>
            <person name="Nguyen M."/>
            <person name="Nierman W.C."/>
            <person name="Osborne B.I."/>
            <person name="Pai G."/>
            <person name="Peterson J."/>
            <person name="Pham P.K."/>
            <person name="Rizzo M."/>
            <person name="Rooney T."/>
            <person name="Rowley D."/>
            <person name="Sakano H."/>
            <person name="Salzberg S.L."/>
            <person name="Schwartz J.R."/>
            <person name="Shinn P."/>
            <person name="Southwick A.M."/>
            <person name="Sun H."/>
            <person name="Tallon L.J."/>
            <person name="Tambunga G."/>
            <person name="Toriumi M.J."/>
            <person name="Town C.D."/>
            <person name="Utterback T."/>
            <person name="Van Aken S."/>
            <person name="Vaysberg M."/>
            <person name="Vysotskaia V.S."/>
            <person name="Walker M."/>
            <person name="Wu D."/>
            <person name="Yu G."/>
            <person name="Fraser C.M."/>
            <person name="Venter J.C."/>
            <person name="Davis R.W."/>
        </authorList>
    </citation>
    <scope>NUCLEOTIDE SEQUENCE [LARGE SCALE GENOMIC DNA]</scope>
    <source>
        <strain>cv. Columbia</strain>
    </source>
</reference>
<reference key="2">
    <citation type="journal article" date="2017" name="Plant J.">
        <title>Araport11: a complete reannotation of the Arabidopsis thaliana reference genome.</title>
        <authorList>
            <person name="Cheng C.Y."/>
            <person name="Krishnakumar V."/>
            <person name="Chan A.P."/>
            <person name="Thibaud-Nissen F."/>
            <person name="Schobel S."/>
            <person name="Town C.D."/>
        </authorList>
    </citation>
    <scope>GENOME REANNOTATION</scope>
    <source>
        <strain>cv. Columbia</strain>
    </source>
</reference>
<reference key="3">
    <citation type="journal article" date="2003" name="Science">
        <title>Empirical analysis of transcriptional activity in the Arabidopsis genome.</title>
        <authorList>
            <person name="Yamada K."/>
            <person name="Lim J."/>
            <person name="Dale J.M."/>
            <person name="Chen H."/>
            <person name="Shinn P."/>
            <person name="Palm C.J."/>
            <person name="Southwick A.M."/>
            <person name="Wu H.C."/>
            <person name="Kim C.J."/>
            <person name="Nguyen M."/>
            <person name="Pham P.K."/>
            <person name="Cheuk R.F."/>
            <person name="Karlin-Newmann G."/>
            <person name="Liu S.X."/>
            <person name="Lam B."/>
            <person name="Sakano H."/>
            <person name="Wu T."/>
            <person name="Yu G."/>
            <person name="Miranda M."/>
            <person name="Quach H.L."/>
            <person name="Tripp M."/>
            <person name="Chang C.H."/>
            <person name="Lee J.M."/>
            <person name="Toriumi M.J."/>
            <person name="Chan M.M."/>
            <person name="Tang C.C."/>
            <person name="Onodera C.S."/>
            <person name="Deng J.M."/>
            <person name="Akiyama K."/>
            <person name="Ansari Y."/>
            <person name="Arakawa T."/>
            <person name="Banh J."/>
            <person name="Banno F."/>
            <person name="Bowser L."/>
            <person name="Brooks S.Y."/>
            <person name="Carninci P."/>
            <person name="Chao Q."/>
            <person name="Choy N."/>
            <person name="Enju A."/>
            <person name="Goldsmith A.D."/>
            <person name="Gurjal M."/>
            <person name="Hansen N.F."/>
            <person name="Hayashizaki Y."/>
            <person name="Johnson-Hopson C."/>
            <person name="Hsuan V.W."/>
            <person name="Iida K."/>
            <person name="Karnes M."/>
            <person name="Khan S."/>
            <person name="Koesema E."/>
            <person name="Ishida J."/>
            <person name="Jiang P.X."/>
            <person name="Jones T."/>
            <person name="Kawai J."/>
            <person name="Kamiya A."/>
            <person name="Meyers C."/>
            <person name="Nakajima M."/>
            <person name="Narusaka M."/>
            <person name="Seki M."/>
            <person name="Sakurai T."/>
            <person name="Satou M."/>
            <person name="Tamse R."/>
            <person name="Vaysberg M."/>
            <person name="Wallender E.K."/>
            <person name="Wong C."/>
            <person name="Yamamura Y."/>
            <person name="Yuan S."/>
            <person name="Shinozaki K."/>
            <person name="Davis R.W."/>
            <person name="Theologis A."/>
            <person name="Ecker J.R."/>
        </authorList>
    </citation>
    <scope>NUCLEOTIDE SEQUENCE [LARGE SCALE MRNA]</scope>
    <source>
        <strain>cv. Columbia</strain>
    </source>
</reference>
<reference key="4">
    <citation type="journal article" date="2007" name="J. Biol. Chem.">
        <title>Biosynthesis of truncated N-linked oligosaccharides results from non-orthologous hexosaminidase-mediated mechanisms in nematodes, plants, and insects.</title>
        <authorList>
            <person name="Gutternigg M."/>
            <person name="Kretschmer-Lubich D."/>
            <person name="Paschinger K."/>
            <person name="Rendic D."/>
            <person name="Hader J."/>
            <person name="Geier P."/>
            <person name="Ranftl R."/>
            <person name="Jantsch V."/>
            <person name="Lochnit G."/>
            <person name="Wilson I.B.H."/>
        </authorList>
    </citation>
    <scope>FUNCTION</scope>
    <scope>BIOPHYSICOCHEMICAL PROPERTIES</scope>
    <scope>ACTIVITY REGULATION</scope>
    <scope>REVIEW</scope>
</reference>
<reference key="5">
    <citation type="journal article" date="2007" name="Plant Physiol.">
        <title>Enzymatic properties and subcellular localization of Arabidopsis beta-N-acetylhexosaminidases.</title>
        <authorList>
            <person name="Strasser R."/>
            <person name="Bondili J.S."/>
            <person name="Schoberer J."/>
            <person name="Svoboda B."/>
            <person name="Liebminger E."/>
            <person name="Glossl J."/>
            <person name="Altmann F."/>
            <person name="Steinkellner H."/>
            <person name="Mach L."/>
        </authorList>
    </citation>
    <scope>SUBCELLULAR LOCATION</scope>
    <scope>TISSUE SPECIFICITY</scope>
    <scope>FUNCTION</scope>
    <scope>CATALYTIC ACTIVITY</scope>
    <scope>GLYCOSYLATION</scope>
    <scope>BIOPHYSICOCHEMICAL PROPERTIES</scope>
    <scope>GENE FAMILY</scope>
    <scope>NOMENCLATURE</scope>
</reference>
<reference key="6">
    <citation type="journal article" date="2011" name="J. Biol. Chem.">
        <title>Beta-N-acetylhexosaminidases HEXO1 and HEXO3 are responsible for the formation of paucimannosidic N-glycans in Arabidopsis thaliana.</title>
        <authorList>
            <person name="Liebminger E."/>
            <person name="Veit C."/>
            <person name="Pabst M."/>
            <person name="Batoux M."/>
            <person name="Zipfel C."/>
            <person name="Altmann F."/>
            <person name="Mach L."/>
            <person name="Strasser R."/>
        </authorList>
    </citation>
    <scope>FUNCTION</scope>
    <scope>DISRUPTION PHENOTYPE</scope>
    <scope>SUBCELLULAR LOCATION</scope>
    <source>
        <strain>cv. Columbia</strain>
    </source>
</reference>